<protein>
    <recommendedName>
        <fullName evidence="1">Holliday junction branch migration complex subunit RuvB</fullName>
        <ecNumber evidence="1">3.6.4.-</ecNumber>
    </recommendedName>
</protein>
<reference key="1">
    <citation type="journal article" date="2007" name="Genes Dev.">
        <title>New insights into Acinetobacter baumannii pathogenesis revealed by high-density pyrosequencing and transposon mutagenesis.</title>
        <authorList>
            <person name="Smith M.G."/>
            <person name="Gianoulis T.A."/>
            <person name="Pukatzki S."/>
            <person name="Mekalanos J.J."/>
            <person name="Ornston L.N."/>
            <person name="Gerstein M."/>
            <person name="Snyder M."/>
        </authorList>
    </citation>
    <scope>NUCLEOTIDE SEQUENCE [LARGE SCALE GENOMIC DNA]</scope>
    <source>
        <strain>ATCC 17978 / DSM 105126 / CIP 53.77 / LMG 1025 / NCDC KC755 / 5377</strain>
    </source>
</reference>
<dbReference type="EC" id="3.6.4.-" evidence="1"/>
<dbReference type="EMBL" id="CP000521">
    <property type="protein sequence ID" value="ABO13005.2"/>
    <property type="molecule type" value="Genomic_DNA"/>
</dbReference>
<dbReference type="RefSeq" id="WP_001154002.1">
    <property type="nucleotide sequence ID" value="NZ_CP053098.1"/>
</dbReference>
<dbReference type="SMR" id="A3M7W1"/>
<dbReference type="GeneID" id="92894861"/>
<dbReference type="KEGG" id="acb:A1S_2588"/>
<dbReference type="HOGENOM" id="CLU_055599_1_0_6"/>
<dbReference type="GO" id="GO:0005737">
    <property type="term" value="C:cytoplasm"/>
    <property type="evidence" value="ECO:0007669"/>
    <property type="project" value="UniProtKB-SubCell"/>
</dbReference>
<dbReference type="GO" id="GO:0048476">
    <property type="term" value="C:Holliday junction resolvase complex"/>
    <property type="evidence" value="ECO:0007669"/>
    <property type="project" value="UniProtKB-UniRule"/>
</dbReference>
<dbReference type="GO" id="GO:0005524">
    <property type="term" value="F:ATP binding"/>
    <property type="evidence" value="ECO:0007669"/>
    <property type="project" value="UniProtKB-UniRule"/>
</dbReference>
<dbReference type="GO" id="GO:0016887">
    <property type="term" value="F:ATP hydrolysis activity"/>
    <property type="evidence" value="ECO:0007669"/>
    <property type="project" value="InterPro"/>
</dbReference>
<dbReference type="GO" id="GO:0000400">
    <property type="term" value="F:four-way junction DNA binding"/>
    <property type="evidence" value="ECO:0007669"/>
    <property type="project" value="UniProtKB-UniRule"/>
</dbReference>
<dbReference type="GO" id="GO:0009378">
    <property type="term" value="F:four-way junction helicase activity"/>
    <property type="evidence" value="ECO:0007669"/>
    <property type="project" value="InterPro"/>
</dbReference>
<dbReference type="GO" id="GO:0006310">
    <property type="term" value="P:DNA recombination"/>
    <property type="evidence" value="ECO:0007669"/>
    <property type="project" value="UniProtKB-UniRule"/>
</dbReference>
<dbReference type="GO" id="GO:0006281">
    <property type="term" value="P:DNA repair"/>
    <property type="evidence" value="ECO:0007669"/>
    <property type="project" value="UniProtKB-UniRule"/>
</dbReference>
<dbReference type="CDD" id="cd00009">
    <property type="entry name" value="AAA"/>
    <property type="match status" value="1"/>
</dbReference>
<dbReference type="FunFam" id="1.10.8.60:FF:000023">
    <property type="entry name" value="Holliday junction ATP-dependent DNA helicase RuvB"/>
    <property type="match status" value="1"/>
</dbReference>
<dbReference type="FunFam" id="3.40.50.300:FF:000073">
    <property type="entry name" value="Holliday junction ATP-dependent DNA helicase RuvB"/>
    <property type="match status" value="1"/>
</dbReference>
<dbReference type="Gene3D" id="1.10.8.60">
    <property type="match status" value="1"/>
</dbReference>
<dbReference type="Gene3D" id="3.40.50.300">
    <property type="entry name" value="P-loop containing nucleotide triphosphate hydrolases"/>
    <property type="match status" value="1"/>
</dbReference>
<dbReference type="Gene3D" id="1.10.10.10">
    <property type="entry name" value="Winged helix-like DNA-binding domain superfamily/Winged helix DNA-binding domain"/>
    <property type="match status" value="1"/>
</dbReference>
<dbReference type="HAMAP" id="MF_00016">
    <property type="entry name" value="DNA_HJ_migration_RuvB"/>
    <property type="match status" value="1"/>
</dbReference>
<dbReference type="InterPro" id="IPR003593">
    <property type="entry name" value="AAA+_ATPase"/>
</dbReference>
<dbReference type="InterPro" id="IPR041445">
    <property type="entry name" value="AAA_lid_4"/>
</dbReference>
<dbReference type="InterPro" id="IPR004605">
    <property type="entry name" value="DNA_helicase_Holl-junc_RuvB"/>
</dbReference>
<dbReference type="InterPro" id="IPR027417">
    <property type="entry name" value="P-loop_NTPase"/>
</dbReference>
<dbReference type="InterPro" id="IPR008824">
    <property type="entry name" value="RuvB-like_N"/>
</dbReference>
<dbReference type="InterPro" id="IPR008823">
    <property type="entry name" value="RuvB_C"/>
</dbReference>
<dbReference type="InterPro" id="IPR036388">
    <property type="entry name" value="WH-like_DNA-bd_sf"/>
</dbReference>
<dbReference type="InterPro" id="IPR036390">
    <property type="entry name" value="WH_DNA-bd_sf"/>
</dbReference>
<dbReference type="NCBIfam" id="NF000868">
    <property type="entry name" value="PRK00080.1"/>
    <property type="match status" value="1"/>
</dbReference>
<dbReference type="NCBIfam" id="TIGR00635">
    <property type="entry name" value="ruvB"/>
    <property type="match status" value="1"/>
</dbReference>
<dbReference type="PANTHER" id="PTHR42848">
    <property type="match status" value="1"/>
</dbReference>
<dbReference type="PANTHER" id="PTHR42848:SF1">
    <property type="entry name" value="HOLLIDAY JUNCTION BRANCH MIGRATION COMPLEX SUBUNIT RUVB"/>
    <property type="match status" value="1"/>
</dbReference>
<dbReference type="Pfam" id="PF17864">
    <property type="entry name" value="AAA_lid_4"/>
    <property type="match status" value="1"/>
</dbReference>
<dbReference type="Pfam" id="PF05491">
    <property type="entry name" value="RuvB_C"/>
    <property type="match status" value="1"/>
</dbReference>
<dbReference type="Pfam" id="PF05496">
    <property type="entry name" value="RuvB_N"/>
    <property type="match status" value="1"/>
</dbReference>
<dbReference type="SMART" id="SM00382">
    <property type="entry name" value="AAA"/>
    <property type="match status" value="1"/>
</dbReference>
<dbReference type="SUPFAM" id="SSF52540">
    <property type="entry name" value="P-loop containing nucleoside triphosphate hydrolases"/>
    <property type="match status" value="1"/>
</dbReference>
<dbReference type="SUPFAM" id="SSF46785">
    <property type="entry name" value="Winged helix' DNA-binding domain"/>
    <property type="match status" value="1"/>
</dbReference>
<comment type="function">
    <text evidence="1">The RuvA-RuvB-RuvC complex processes Holliday junction (HJ) DNA during genetic recombination and DNA repair, while the RuvA-RuvB complex plays an important role in the rescue of blocked DNA replication forks via replication fork reversal (RFR). RuvA specifically binds to HJ cruciform DNA, conferring on it an open structure. The RuvB hexamer acts as an ATP-dependent pump, pulling dsDNA into and through the RuvAB complex. RuvB forms 2 homohexamers on either side of HJ DNA bound by 1 or 2 RuvA tetramers; 4 subunits per hexamer contact DNA at a time. Coordinated motions by a converter formed by DNA-disengaged RuvB subunits stimulates ATP hydrolysis and nucleotide exchange. Immobilization of the converter enables RuvB to convert the ATP-contained energy into a lever motion, pulling 2 nucleotides of DNA out of the RuvA tetramer per ATP hydrolyzed, thus driving DNA branch migration. The RuvB motors rotate together with the DNA substrate, which together with the progressing nucleotide cycle form the mechanistic basis for DNA recombination by continuous HJ branch migration. Branch migration allows RuvC to scan DNA until it finds its consensus sequence, where it cleaves and resolves cruciform DNA.</text>
</comment>
<comment type="catalytic activity">
    <reaction evidence="1">
        <text>ATP + H2O = ADP + phosphate + H(+)</text>
        <dbReference type="Rhea" id="RHEA:13065"/>
        <dbReference type="ChEBI" id="CHEBI:15377"/>
        <dbReference type="ChEBI" id="CHEBI:15378"/>
        <dbReference type="ChEBI" id="CHEBI:30616"/>
        <dbReference type="ChEBI" id="CHEBI:43474"/>
        <dbReference type="ChEBI" id="CHEBI:456216"/>
    </reaction>
</comment>
<comment type="subunit">
    <text evidence="1">Homohexamer. Forms an RuvA(8)-RuvB(12)-Holliday junction (HJ) complex. HJ DNA is sandwiched between 2 RuvA tetramers; dsDNA enters through RuvA and exits via RuvB. An RuvB hexamer assembles on each DNA strand where it exits the tetramer. Each RuvB hexamer is contacted by two RuvA subunits (via domain III) on 2 adjacent RuvB subunits; this complex drives branch migration. In the full resolvosome a probable DNA-RuvA(4)-RuvB(12)-RuvC(2) complex forms which resolves the HJ.</text>
</comment>
<comment type="subcellular location">
    <subcellularLocation>
        <location evidence="1">Cytoplasm</location>
    </subcellularLocation>
</comment>
<comment type="domain">
    <text evidence="1">Has 3 domains, the large (RuvB-L) and small ATPase (RuvB-S) domains and the C-terminal head (RuvB-H) domain. The head domain binds DNA, while the ATPase domains jointly bind ATP, ADP or are empty depending on the state of the subunit in the translocation cycle. During a single DNA translocation step the structure of each domain remains the same, but their relative positions change.</text>
</comment>
<comment type="similarity">
    <text evidence="1">Belongs to the RuvB family.</text>
</comment>
<proteinExistence type="inferred from homology"/>
<keyword id="KW-0067">ATP-binding</keyword>
<keyword id="KW-0963">Cytoplasm</keyword>
<keyword id="KW-0227">DNA damage</keyword>
<keyword id="KW-0233">DNA recombination</keyword>
<keyword id="KW-0234">DNA repair</keyword>
<keyword id="KW-0238">DNA-binding</keyword>
<keyword id="KW-0378">Hydrolase</keyword>
<keyword id="KW-0547">Nucleotide-binding</keyword>
<name>RUVB_ACIBT</name>
<feature type="chain" id="PRO_0000322776" description="Holliday junction branch migration complex subunit RuvB">
    <location>
        <begin position="1"/>
        <end position="334"/>
    </location>
</feature>
<feature type="region of interest" description="Large ATPase domain (RuvB-L)" evidence="1">
    <location>
        <begin position="1"/>
        <end position="181"/>
    </location>
</feature>
<feature type="region of interest" description="Small ATPAse domain (RuvB-S)" evidence="1">
    <location>
        <begin position="182"/>
        <end position="252"/>
    </location>
</feature>
<feature type="region of interest" description="Head domain (RuvB-H)" evidence="1">
    <location>
        <begin position="255"/>
        <end position="334"/>
    </location>
</feature>
<feature type="binding site" evidence="1">
    <location>
        <position position="20"/>
    </location>
    <ligand>
        <name>ATP</name>
        <dbReference type="ChEBI" id="CHEBI:30616"/>
    </ligand>
</feature>
<feature type="binding site" evidence="1">
    <location>
        <position position="21"/>
    </location>
    <ligand>
        <name>ATP</name>
        <dbReference type="ChEBI" id="CHEBI:30616"/>
    </ligand>
</feature>
<feature type="binding site" evidence="1">
    <location>
        <position position="62"/>
    </location>
    <ligand>
        <name>ATP</name>
        <dbReference type="ChEBI" id="CHEBI:30616"/>
    </ligand>
</feature>
<feature type="binding site" evidence="1">
    <location>
        <position position="65"/>
    </location>
    <ligand>
        <name>ATP</name>
        <dbReference type="ChEBI" id="CHEBI:30616"/>
    </ligand>
</feature>
<feature type="binding site" evidence="1">
    <location>
        <position position="66"/>
    </location>
    <ligand>
        <name>ATP</name>
        <dbReference type="ChEBI" id="CHEBI:30616"/>
    </ligand>
</feature>
<feature type="binding site" evidence="1">
    <location>
        <position position="66"/>
    </location>
    <ligand>
        <name>Mg(2+)</name>
        <dbReference type="ChEBI" id="CHEBI:18420"/>
    </ligand>
</feature>
<feature type="binding site" evidence="1">
    <location>
        <position position="67"/>
    </location>
    <ligand>
        <name>ATP</name>
        <dbReference type="ChEBI" id="CHEBI:30616"/>
    </ligand>
</feature>
<feature type="binding site" evidence="1">
    <location>
        <begin position="128"/>
        <end position="130"/>
    </location>
    <ligand>
        <name>ATP</name>
        <dbReference type="ChEBI" id="CHEBI:30616"/>
    </ligand>
</feature>
<feature type="binding site" evidence="1">
    <location>
        <position position="171"/>
    </location>
    <ligand>
        <name>ATP</name>
        <dbReference type="ChEBI" id="CHEBI:30616"/>
    </ligand>
</feature>
<feature type="binding site" evidence="1">
    <location>
        <position position="181"/>
    </location>
    <ligand>
        <name>ATP</name>
        <dbReference type="ChEBI" id="CHEBI:30616"/>
    </ligand>
</feature>
<feature type="binding site" evidence="1">
    <location>
        <position position="218"/>
    </location>
    <ligand>
        <name>ATP</name>
        <dbReference type="ChEBI" id="CHEBI:30616"/>
    </ligand>
</feature>
<feature type="binding site" evidence="1">
    <location>
        <position position="310"/>
    </location>
    <ligand>
        <name>DNA</name>
        <dbReference type="ChEBI" id="CHEBI:16991"/>
    </ligand>
</feature>
<feature type="binding site" evidence="1">
    <location>
        <position position="315"/>
    </location>
    <ligand>
        <name>DNA</name>
        <dbReference type="ChEBI" id="CHEBI:16991"/>
    </ligand>
</feature>
<gene>
    <name evidence="1" type="primary">ruvB</name>
    <name type="ordered locus">A1S_2588</name>
</gene>
<accession>A3M7W1</accession>
<organism>
    <name type="scientific">Acinetobacter baumannii (strain ATCC 17978 / DSM 105126 / CIP 53.77 / LMG 1025 / NCDC KC755 / 5377)</name>
    <dbReference type="NCBI Taxonomy" id="400667"/>
    <lineage>
        <taxon>Bacteria</taxon>
        <taxon>Pseudomonadati</taxon>
        <taxon>Pseudomonadota</taxon>
        <taxon>Gammaproteobacteria</taxon>
        <taxon>Moraxellales</taxon>
        <taxon>Moraxellaceae</taxon>
        <taxon>Acinetobacter</taxon>
        <taxon>Acinetobacter calcoaceticus/baumannii complex</taxon>
    </lineage>
</organism>
<sequence>MQDRLISGTEKPEDHFDRAIRPTSLADYIGQPVVREQMEIFIGAARGRGEALDHTLIFGPPGLGKTTLANIIAREMGGNLKSTSGPVLERAGDLAAMLTNLEEGDVLFIDEIHRLSPVIEEILYPAMEDYQLDIMIGEGPAARSIKLDLPPFTLVAATTRAGLLTSPLRDRFGIVQRLEFYSVEDLTHIVSRSANLMDVPITVEGAEEVARRSRGTPRIANRLLRRVRDYAQVKGTGEVNHEMAQRALDMLNVDKAGLDTLDRRYLSMLLERFDGGPAGVEALAAAMAEDSGTLEDVIEPYLIQQGYVMRTARGRIATNQSYLQFGMTPPEPKN</sequence>
<evidence type="ECO:0000255" key="1">
    <source>
        <dbReference type="HAMAP-Rule" id="MF_00016"/>
    </source>
</evidence>